<keyword id="KW-0028">Amino-acid biosynthesis</keyword>
<keyword id="KW-0368">Histidine biosynthesis</keyword>
<keyword id="KW-0378">Hydrolase</keyword>
<keyword id="KW-0486">Methionine biosynthesis</keyword>
<keyword id="KW-0511">Multifunctional enzyme</keyword>
<keyword id="KW-0521">NADP</keyword>
<keyword id="KW-0554">One-carbon metabolism</keyword>
<keyword id="KW-0560">Oxidoreductase</keyword>
<keyword id="KW-0658">Purine biosynthesis</keyword>
<reference key="1">
    <citation type="submission" date="2008-10" db="EMBL/GenBank/DDBJ databases">
        <title>Genome sequence of Bacillus cereus B4264.</title>
        <authorList>
            <person name="Dodson R.J."/>
            <person name="Durkin A.S."/>
            <person name="Rosovitz M.J."/>
            <person name="Rasko D.A."/>
            <person name="Hoffmaster A."/>
            <person name="Ravel J."/>
            <person name="Sutton G."/>
        </authorList>
    </citation>
    <scope>NUCLEOTIDE SEQUENCE [LARGE SCALE GENOMIC DNA]</scope>
    <source>
        <strain>B4264</strain>
    </source>
</reference>
<accession>B7HB52</accession>
<dbReference type="EC" id="1.5.1.5" evidence="1"/>
<dbReference type="EC" id="3.5.4.9" evidence="1"/>
<dbReference type="EMBL" id="CP001176">
    <property type="protein sequence ID" value="ACK60406.1"/>
    <property type="molecule type" value="Genomic_DNA"/>
</dbReference>
<dbReference type="RefSeq" id="WP_000226738.1">
    <property type="nucleotide sequence ID" value="NC_011725.1"/>
</dbReference>
<dbReference type="SMR" id="B7HB52"/>
<dbReference type="KEGG" id="bcb:BCB4264_A4291"/>
<dbReference type="HOGENOM" id="CLU_034045_2_1_9"/>
<dbReference type="UniPathway" id="UPA00193"/>
<dbReference type="Proteomes" id="UP000007096">
    <property type="component" value="Chromosome"/>
</dbReference>
<dbReference type="GO" id="GO:0005829">
    <property type="term" value="C:cytosol"/>
    <property type="evidence" value="ECO:0007669"/>
    <property type="project" value="TreeGrafter"/>
</dbReference>
<dbReference type="GO" id="GO:0004477">
    <property type="term" value="F:methenyltetrahydrofolate cyclohydrolase activity"/>
    <property type="evidence" value="ECO:0007669"/>
    <property type="project" value="UniProtKB-UniRule"/>
</dbReference>
<dbReference type="GO" id="GO:0004488">
    <property type="term" value="F:methylenetetrahydrofolate dehydrogenase (NADP+) activity"/>
    <property type="evidence" value="ECO:0007669"/>
    <property type="project" value="UniProtKB-UniRule"/>
</dbReference>
<dbReference type="GO" id="GO:0000105">
    <property type="term" value="P:L-histidine biosynthetic process"/>
    <property type="evidence" value="ECO:0007669"/>
    <property type="project" value="UniProtKB-KW"/>
</dbReference>
<dbReference type="GO" id="GO:0009086">
    <property type="term" value="P:methionine biosynthetic process"/>
    <property type="evidence" value="ECO:0007669"/>
    <property type="project" value="UniProtKB-KW"/>
</dbReference>
<dbReference type="GO" id="GO:0006164">
    <property type="term" value="P:purine nucleotide biosynthetic process"/>
    <property type="evidence" value="ECO:0007669"/>
    <property type="project" value="UniProtKB-KW"/>
</dbReference>
<dbReference type="GO" id="GO:0035999">
    <property type="term" value="P:tetrahydrofolate interconversion"/>
    <property type="evidence" value="ECO:0007669"/>
    <property type="project" value="UniProtKB-UniRule"/>
</dbReference>
<dbReference type="CDD" id="cd01080">
    <property type="entry name" value="NAD_bind_m-THF_DH_Cyclohyd"/>
    <property type="match status" value="1"/>
</dbReference>
<dbReference type="FunFam" id="3.40.50.10860:FF:000001">
    <property type="entry name" value="Bifunctional protein FolD"/>
    <property type="match status" value="1"/>
</dbReference>
<dbReference type="FunFam" id="3.40.50.720:FF:000006">
    <property type="entry name" value="Bifunctional protein FolD"/>
    <property type="match status" value="1"/>
</dbReference>
<dbReference type="Gene3D" id="3.40.50.10860">
    <property type="entry name" value="Leucine Dehydrogenase, chain A, domain 1"/>
    <property type="match status" value="1"/>
</dbReference>
<dbReference type="Gene3D" id="3.40.50.720">
    <property type="entry name" value="NAD(P)-binding Rossmann-like Domain"/>
    <property type="match status" value="1"/>
</dbReference>
<dbReference type="HAMAP" id="MF_01576">
    <property type="entry name" value="THF_DHG_CYH"/>
    <property type="match status" value="1"/>
</dbReference>
<dbReference type="InterPro" id="IPR046346">
    <property type="entry name" value="Aminoacid_DH-like_N_sf"/>
</dbReference>
<dbReference type="InterPro" id="IPR036291">
    <property type="entry name" value="NAD(P)-bd_dom_sf"/>
</dbReference>
<dbReference type="InterPro" id="IPR000672">
    <property type="entry name" value="THF_DH/CycHdrlase"/>
</dbReference>
<dbReference type="InterPro" id="IPR020630">
    <property type="entry name" value="THF_DH/CycHdrlase_cat_dom"/>
</dbReference>
<dbReference type="InterPro" id="IPR020867">
    <property type="entry name" value="THF_DH/CycHdrlase_CS"/>
</dbReference>
<dbReference type="InterPro" id="IPR020631">
    <property type="entry name" value="THF_DH/CycHdrlase_NAD-bd_dom"/>
</dbReference>
<dbReference type="NCBIfam" id="NF008058">
    <property type="entry name" value="PRK10792.1"/>
    <property type="match status" value="1"/>
</dbReference>
<dbReference type="NCBIfam" id="NF010783">
    <property type="entry name" value="PRK14186.1"/>
    <property type="match status" value="1"/>
</dbReference>
<dbReference type="PANTHER" id="PTHR48099:SF5">
    <property type="entry name" value="C-1-TETRAHYDROFOLATE SYNTHASE, CYTOPLASMIC"/>
    <property type="match status" value="1"/>
</dbReference>
<dbReference type="PANTHER" id="PTHR48099">
    <property type="entry name" value="C-1-TETRAHYDROFOLATE SYNTHASE, CYTOPLASMIC-RELATED"/>
    <property type="match status" value="1"/>
</dbReference>
<dbReference type="Pfam" id="PF00763">
    <property type="entry name" value="THF_DHG_CYH"/>
    <property type="match status" value="1"/>
</dbReference>
<dbReference type="Pfam" id="PF02882">
    <property type="entry name" value="THF_DHG_CYH_C"/>
    <property type="match status" value="1"/>
</dbReference>
<dbReference type="PRINTS" id="PR00085">
    <property type="entry name" value="THFDHDRGNASE"/>
</dbReference>
<dbReference type="SUPFAM" id="SSF53223">
    <property type="entry name" value="Aminoacid dehydrogenase-like, N-terminal domain"/>
    <property type="match status" value="1"/>
</dbReference>
<dbReference type="SUPFAM" id="SSF51735">
    <property type="entry name" value="NAD(P)-binding Rossmann-fold domains"/>
    <property type="match status" value="1"/>
</dbReference>
<dbReference type="PROSITE" id="PS00767">
    <property type="entry name" value="THF_DHG_CYH_2"/>
    <property type="match status" value="1"/>
</dbReference>
<sequence length="286" mass="31063">MVAVIIKGNEVAEKKRAQLTEEVVKLKEQGIVPGLAVILVGEDPASRSYVKGKEKGCEQVGIYSELIELPETITEERLLAEIDRLNGDDRINGILVQLPLPKHIEEKAIIERISPEKDVDGFHPISVGRMMTGQDTFLPCTPHGIVELVKETSLDISGKHVVVIGRSNIVGKPVGQLFLNENATVTYCHSKTQNMKELSKLADILIVAVGRPKMITADYIKEGAVVIDVGVNRLETGKLCGDVDFDNVLDVAGYITPVPKGVGPMTITMLLHNTVESAKRAGVVCK</sequence>
<feature type="chain" id="PRO_1000147440" description="Bifunctional protein FolD">
    <location>
        <begin position="1"/>
        <end position="286"/>
    </location>
</feature>
<feature type="binding site" evidence="1">
    <location>
        <begin position="165"/>
        <end position="167"/>
    </location>
    <ligand>
        <name>NADP(+)</name>
        <dbReference type="ChEBI" id="CHEBI:58349"/>
    </ligand>
</feature>
<feature type="binding site" evidence="1">
    <location>
        <position position="190"/>
    </location>
    <ligand>
        <name>NADP(+)</name>
        <dbReference type="ChEBI" id="CHEBI:58349"/>
    </ligand>
</feature>
<feature type="binding site" evidence="1">
    <location>
        <position position="231"/>
    </location>
    <ligand>
        <name>NADP(+)</name>
        <dbReference type="ChEBI" id="CHEBI:58349"/>
    </ligand>
</feature>
<comment type="function">
    <text evidence="1">Catalyzes the oxidation of 5,10-methylenetetrahydrofolate to 5,10-methenyltetrahydrofolate and then the hydrolysis of 5,10-methenyltetrahydrofolate to 10-formyltetrahydrofolate.</text>
</comment>
<comment type="catalytic activity">
    <reaction evidence="1">
        <text>(6R)-5,10-methylene-5,6,7,8-tetrahydrofolate + NADP(+) = (6R)-5,10-methenyltetrahydrofolate + NADPH</text>
        <dbReference type="Rhea" id="RHEA:22812"/>
        <dbReference type="ChEBI" id="CHEBI:15636"/>
        <dbReference type="ChEBI" id="CHEBI:57455"/>
        <dbReference type="ChEBI" id="CHEBI:57783"/>
        <dbReference type="ChEBI" id="CHEBI:58349"/>
        <dbReference type="EC" id="1.5.1.5"/>
    </reaction>
</comment>
<comment type="catalytic activity">
    <reaction evidence="1">
        <text>(6R)-5,10-methenyltetrahydrofolate + H2O = (6R)-10-formyltetrahydrofolate + H(+)</text>
        <dbReference type="Rhea" id="RHEA:23700"/>
        <dbReference type="ChEBI" id="CHEBI:15377"/>
        <dbReference type="ChEBI" id="CHEBI:15378"/>
        <dbReference type="ChEBI" id="CHEBI:57455"/>
        <dbReference type="ChEBI" id="CHEBI:195366"/>
        <dbReference type="EC" id="3.5.4.9"/>
    </reaction>
</comment>
<comment type="pathway">
    <text evidence="1">One-carbon metabolism; tetrahydrofolate interconversion.</text>
</comment>
<comment type="subunit">
    <text evidence="1">Homodimer.</text>
</comment>
<comment type="similarity">
    <text evidence="1">Belongs to the tetrahydrofolate dehydrogenase/cyclohydrolase family.</text>
</comment>
<name>FOLD_BACC4</name>
<organism>
    <name type="scientific">Bacillus cereus (strain B4264)</name>
    <dbReference type="NCBI Taxonomy" id="405532"/>
    <lineage>
        <taxon>Bacteria</taxon>
        <taxon>Bacillati</taxon>
        <taxon>Bacillota</taxon>
        <taxon>Bacilli</taxon>
        <taxon>Bacillales</taxon>
        <taxon>Bacillaceae</taxon>
        <taxon>Bacillus</taxon>
        <taxon>Bacillus cereus group</taxon>
    </lineage>
</organism>
<evidence type="ECO:0000255" key="1">
    <source>
        <dbReference type="HAMAP-Rule" id="MF_01576"/>
    </source>
</evidence>
<proteinExistence type="inferred from homology"/>
<protein>
    <recommendedName>
        <fullName evidence="1">Bifunctional protein FolD</fullName>
    </recommendedName>
    <domain>
        <recommendedName>
            <fullName evidence="1">Methylenetetrahydrofolate dehydrogenase</fullName>
            <ecNumber evidence="1">1.5.1.5</ecNumber>
        </recommendedName>
    </domain>
    <domain>
        <recommendedName>
            <fullName evidence="1">Methenyltetrahydrofolate cyclohydrolase</fullName>
            <ecNumber evidence="1">3.5.4.9</ecNumber>
        </recommendedName>
    </domain>
</protein>
<gene>
    <name evidence="1" type="primary">folD</name>
    <name type="ordered locus">BCB4264_A4291</name>
</gene>